<feature type="signal peptide" evidence="2">
    <location>
        <begin position="1"/>
        <end position="18"/>
    </location>
</feature>
<feature type="chain" id="PRO_0000021269" description="Facilitator of iron transport 3">
    <location>
        <begin position="19"/>
        <end position="182"/>
    </location>
</feature>
<feature type="propeptide" id="PRO_0000372453" description="Removed in mature form" evidence="2">
    <location>
        <begin position="183"/>
        <end position="204"/>
    </location>
</feature>
<feature type="region of interest" description="Disordered" evidence="3">
    <location>
        <begin position="84"/>
        <end position="104"/>
    </location>
</feature>
<feature type="region of interest" description="Disordered" evidence="3">
    <location>
        <begin position="133"/>
        <end position="175"/>
    </location>
</feature>
<feature type="compositionally biased region" description="Low complexity" evidence="3">
    <location>
        <begin position="135"/>
        <end position="175"/>
    </location>
</feature>
<feature type="lipid moiety-binding region" description="GPI-anchor amidated glycine" evidence="2">
    <location>
        <position position="182"/>
    </location>
</feature>
<evidence type="ECO:0000250" key="1"/>
<evidence type="ECO:0000255" key="2"/>
<evidence type="ECO:0000256" key="3">
    <source>
        <dbReference type="SAM" id="MobiDB-lite"/>
    </source>
</evidence>
<evidence type="ECO:0000269" key="4">
    <source>
    </source>
</evidence>
<evidence type="ECO:0000305" key="5"/>
<evidence type="ECO:0000305" key="6">
    <source>
    </source>
</evidence>
<sequence length="204" mass="19836">MKFSSALVLSAVAATALAESITTTITATKNGHVYTKTVTQDATFVWGGEDSYASSTSAAESSAAETSAAETSAAATTSAAATTSAAETSSAAETSSADEGSGSSITTTITATKNGHVYTKTVTQDATFVWTGEGSSNTWSPSSTSTSSEAATSSASTTATTTAETSSSATSSSTAELSSYTGAADAITAGTGLMGAALAAVMLL</sequence>
<name>FIT3_YEAST</name>
<keyword id="KW-0134">Cell wall</keyword>
<keyword id="KW-0325">Glycoprotein</keyword>
<keyword id="KW-0336">GPI-anchor</keyword>
<keyword id="KW-0406">Ion transport</keyword>
<keyword id="KW-0408">Iron</keyword>
<keyword id="KW-0410">Iron transport</keyword>
<keyword id="KW-0449">Lipoprotein</keyword>
<keyword id="KW-0472">Membrane</keyword>
<keyword id="KW-1185">Reference proteome</keyword>
<keyword id="KW-0964">Secreted</keyword>
<keyword id="KW-0732">Signal</keyword>
<keyword id="KW-0813">Transport</keyword>
<accession>Q08907</accession>
<accession>D6W376</accession>
<gene>
    <name type="primary">FIT3</name>
    <name type="ordered locus">YOR383C</name>
</gene>
<organism>
    <name type="scientific">Saccharomyces cerevisiae (strain ATCC 204508 / S288c)</name>
    <name type="common">Baker's yeast</name>
    <dbReference type="NCBI Taxonomy" id="559292"/>
    <lineage>
        <taxon>Eukaryota</taxon>
        <taxon>Fungi</taxon>
        <taxon>Dikarya</taxon>
        <taxon>Ascomycota</taxon>
        <taxon>Saccharomycotina</taxon>
        <taxon>Saccharomycetes</taxon>
        <taxon>Saccharomycetales</taxon>
        <taxon>Saccharomycetaceae</taxon>
        <taxon>Saccharomyces</taxon>
    </lineage>
</organism>
<comment type="function">
    <text evidence="4">Involved in the uptake of non-siderophore and siderophore sources of iron. Has a role in the retention of iron in the cell wall and periplasmic space.</text>
</comment>
<comment type="subcellular location">
    <subcellularLocation>
        <location evidence="6">Secreted</location>
        <location evidence="6">Cell wall</location>
    </subcellularLocation>
    <subcellularLocation>
        <location evidence="5">Membrane</location>
        <topology evidence="5">Lipid-anchor</topology>
        <topology evidence="5">GPI-anchor</topology>
    </subcellularLocation>
</comment>
<comment type="induction">
    <text evidence="4">By iron.</text>
</comment>
<comment type="PTM">
    <text evidence="1">The GPI-anchor is attached to the protein in the endoplasmic reticulum and serves to target the protein to the cell surface. There, the glucosamine-inositol phospholipid moiety is cleaved off and the GPI-modified mannoprotein is covalently attached via its lipidless GPI glycan remnant to the 1,6-beta-glucan of the outer cell wall layer (By similarity).</text>
</comment>
<dbReference type="EMBL" id="Z75291">
    <property type="protein sequence ID" value="CAA99715.1"/>
    <property type="molecule type" value="Genomic_DNA"/>
</dbReference>
<dbReference type="EMBL" id="BK006948">
    <property type="protein sequence ID" value="DAA11142.1"/>
    <property type="molecule type" value="Genomic_DNA"/>
</dbReference>
<dbReference type="PIR" id="S67295">
    <property type="entry name" value="S67295"/>
</dbReference>
<dbReference type="RefSeq" id="NP_015028.3">
    <property type="nucleotide sequence ID" value="NM_001183803.3"/>
</dbReference>
<dbReference type="BioGRID" id="34764">
    <property type="interactions" value="40"/>
</dbReference>
<dbReference type="DIP" id="DIP-4048N"/>
<dbReference type="FunCoup" id="Q08907">
    <property type="interactions" value="79"/>
</dbReference>
<dbReference type="IntAct" id="Q08907">
    <property type="interactions" value="1"/>
</dbReference>
<dbReference type="MINT" id="Q08907"/>
<dbReference type="STRING" id="4932.YOR383C"/>
<dbReference type="PaxDb" id="4932-YOR383C"/>
<dbReference type="PeptideAtlas" id="Q08907"/>
<dbReference type="EnsemblFungi" id="YOR383C_mRNA">
    <property type="protein sequence ID" value="YOR383C"/>
    <property type="gene ID" value="YOR383C"/>
</dbReference>
<dbReference type="GeneID" id="854565"/>
<dbReference type="KEGG" id="sce:YOR383C"/>
<dbReference type="AGR" id="SGD:S000005910"/>
<dbReference type="SGD" id="S000005910">
    <property type="gene designation" value="FIT3"/>
</dbReference>
<dbReference type="VEuPathDB" id="FungiDB:YOR383C"/>
<dbReference type="eggNOG" id="ENOG502SP38">
    <property type="taxonomic scope" value="Eukaryota"/>
</dbReference>
<dbReference type="GeneTree" id="ENSGT00940000176726"/>
<dbReference type="HOGENOM" id="CLU_113009_0_0_1"/>
<dbReference type="InParanoid" id="Q08907"/>
<dbReference type="OMA" id="TFVWEGE"/>
<dbReference type="OrthoDB" id="4070153at2759"/>
<dbReference type="BioCyc" id="YEAST:G3O-33845-MONOMER"/>
<dbReference type="BioGRID-ORCS" id="854565">
    <property type="hits" value="2 hits in 10 CRISPR screens"/>
</dbReference>
<dbReference type="PRO" id="PR:Q08907"/>
<dbReference type="Proteomes" id="UP000002311">
    <property type="component" value="Chromosome XV"/>
</dbReference>
<dbReference type="RNAct" id="Q08907">
    <property type="molecule type" value="protein"/>
</dbReference>
<dbReference type="GO" id="GO:0071944">
    <property type="term" value="C:cell periphery"/>
    <property type="evidence" value="ECO:0007005"/>
    <property type="project" value="SGD"/>
</dbReference>
<dbReference type="GO" id="GO:0005576">
    <property type="term" value="C:extracellular region"/>
    <property type="evidence" value="ECO:0007669"/>
    <property type="project" value="UniProtKB-KW"/>
</dbReference>
<dbReference type="GO" id="GO:0009277">
    <property type="term" value="C:fungal-type cell wall"/>
    <property type="evidence" value="ECO:0000314"/>
    <property type="project" value="SGD"/>
</dbReference>
<dbReference type="GO" id="GO:0000324">
    <property type="term" value="C:fungal-type vacuole"/>
    <property type="evidence" value="ECO:0007005"/>
    <property type="project" value="SGD"/>
</dbReference>
<dbReference type="GO" id="GO:0098552">
    <property type="term" value="C:side of membrane"/>
    <property type="evidence" value="ECO:0007669"/>
    <property type="project" value="UniProtKB-KW"/>
</dbReference>
<dbReference type="GO" id="GO:0015891">
    <property type="term" value="P:siderophore transport"/>
    <property type="evidence" value="ECO:0000314"/>
    <property type="project" value="SGD"/>
</dbReference>
<proteinExistence type="evidence at transcript level"/>
<protein>
    <recommendedName>
        <fullName>Facilitator of iron transport 3</fullName>
    </recommendedName>
</protein>
<reference key="1">
    <citation type="journal article" date="1997" name="Nature">
        <title>The nucleotide sequence of Saccharomyces cerevisiae chromosome XV.</title>
        <authorList>
            <person name="Dujon B."/>
            <person name="Albermann K."/>
            <person name="Aldea M."/>
            <person name="Alexandraki D."/>
            <person name="Ansorge W."/>
            <person name="Arino J."/>
            <person name="Benes V."/>
            <person name="Bohn C."/>
            <person name="Bolotin-Fukuhara M."/>
            <person name="Bordonne R."/>
            <person name="Boyer J."/>
            <person name="Camasses A."/>
            <person name="Casamayor A."/>
            <person name="Casas C."/>
            <person name="Cheret G."/>
            <person name="Cziepluch C."/>
            <person name="Daignan-Fornier B."/>
            <person name="Dang V.-D."/>
            <person name="de Haan M."/>
            <person name="Delius H."/>
            <person name="Durand P."/>
            <person name="Fairhead C."/>
            <person name="Feldmann H."/>
            <person name="Gaillon L."/>
            <person name="Galisson F."/>
            <person name="Gamo F.-J."/>
            <person name="Gancedo C."/>
            <person name="Goffeau A."/>
            <person name="Goulding S.E."/>
            <person name="Grivell L.A."/>
            <person name="Habbig B."/>
            <person name="Hand N.J."/>
            <person name="Hani J."/>
            <person name="Hattenhorst U."/>
            <person name="Hebling U."/>
            <person name="Hernando Y."/>
            <person name="Herrero E."/>
            <person name="Heumann K."/>
            <person name="Hiesel R."/>
            <person name="Hilger F."/>
            <person name="Hofmann B."/>
            <person name="Hollenberg C.P."/>
            <person name="Hughes B."/>
            <person name="Jauniaux J.-C."/>
            <person name="Kalogeropoulos A."/>
            <person name="Katsoulou C."/>
            <person name="Kordes E."/>
            <person name="Lafuente M.J."/>
            <person name="Landt O."/>
            <person name="Louis E.J."/>
            <person name="Maarse A.C."/>
            <person name="Madania A."/>
            <person name="Mannhaupt G."/>
            <person name="Marck C."/>
            <person name="Martin R.P."/>
            <person name="Mewes H.-W."/>
            <person name="Michaux G."/>
            <person name="Paces V."/>
            <person name="Parle-McDermott A.G."/>
            <person name="Pearson B.M."/>
            <person name="Perrin A."/>
            <person name="Pettersson B."/>
            <person name="Poch O."/>
            <person name="Pohl T.M."/>
            <person name="Poirey R."/>
            <person name="Portetelle D."/>
            <person name="Pujol A."/>
            <person name="Purnelle B."/>
            <person name="Ramezani Rad M."/>
            <person name="Rechmann S."/>
            <person name="Schwager C."/>
            <person name="Schweizer M."/>
            <person name="Sor F."/>
            <person name="Sterky F."/>
            <person name="Tarassov I.A."/>
            <person name="Teodoru C."/>
            <person name="Tettelin H."/>
            <person name="Thierry A."/>
            <person name="Tobiasch E."/>
            <person name="Tzermia M."/>
            <person name="Uhlen M."/>
            <person name="Unseld M."/>
            <person name="Valens M."/>
            <person name="Vandenbol M."/>
            <person name="Vetter I."/>
            <person name="Vlcek C."/>
            <person name="Voet M."/>
            <person name="Volckaert G."/>
            <person name="Voss H."/>
            <person name="Wambutt R."/>
            <person name="Wedler H."/>
            <person name="Wiemann S."/>
            <person name="Winsor B."/>
            <person name="Wolfe K.H."/>
            <person name="Zollner A."/>
            <person name="Zumstein E."/>
            <person name="Kleine K."/>
        </authorList>
    </citation>
    <scope>NUCLEOTIDE SEQUENCE [LARGE SCALE GENOMIC DNA]</scope>
    <source>
        <strain>ATCC 204508 / S288c</strain>
    </source>
</reference>
<reference key="2">
    <citation type="journal article" date="2014" name="G3 (Bethesda)">
        <title>The reference genome sequence of Saccharomyces cerevisiae: Then and now.</title>
        <authorList>
            <person name="Engel S.R."/>
            <person name="Dietrich F.S."/>
            <person name="Fisk D.G."/>
            <person name="Binkley G."/>
            <person name="Balakrishnan R."/>
            <person name="Costanzo M.C."/>
            <person name="Dwight S.S."/>
            <person name="Hitz B.C."/>
            <person name="Karra K."/>
            <person name="Nash R.S."/>
            <person name="Weng S."/>
            <person name="Wong E.D."/>
            <person name="Lloyd P."/>
            <person name="Skrzypek M.S."/>
            <person name="Miyasato S.R."/>
            <person name="Simison M."/>
            <person name="Cherry J.M."/>
        </authorList>
    </citation>
    <scope>GENOME REANNOTATION</scope>
    <source>
        <strain>ATCC 204508 / S288c</strain>
    </source>
</reference>
<reference key="3">
    <citation type="journal article" date="1999" name="J. Bacteriol.">
        <title>Amino acid residues in the omega-minus region participate in cellular localization of yeast glycosylphosphatidylinositol-attached proteins.</title>
        <authorList>
            <person name="Hamada K."/>
            <person name="Terashima H."/>
            <person name="Arisawa M."/>
            <person name="Yabuki N."/>
            <person name="Kitada K."/>
        </authorList>
    </citation>
    <scope>SUBCELLULAR LOCATION</scope>
</reference>
<reference key="4">
    <citation type="journal article" date="2001" name="J. Biol. Chem.">
        <title>Three cell wall mannoproteins facilitate the uptake of iron in Saccharomyces cerevisiae.</title>
        <authorList>
            <person name="Protchenko O."/>
            <person name="Ferea T."/>
            <person name="Rashford J."/>
            <person name="Tiedeman J."/>
            <person name="Brown P.O."/>
            <person name="Botstein D."/>
            <person name="Philpott C.C."/>
        </authorList>
    </citation>
    <scope>FUNCTION</scope>
    <scope>INDUCTION</scope>
</reference>